<dbReference type="EC" id="2.6.1.9"/>
<dbReference type="EMBL" id="BA000040">
    <property type="protein sequence ID" value="BAC51490.1"/>
    <property type="molecule type" value="Genomic_DNA"/>
</dbReference>
<dbReference type="RefSeq" id="NP_772865.1">
    <property type="nucleotide sequence ID" value="NC_004463.1"/>
</dbReference>
<dbReference type="RefSeq" id="WP_011088965.1">
    <property type="nucleotide sequence ID" value="NC_004463.1"/>
</dbReference>
<dbReference type="SMR" id="Q89GX0"/>
<dbReference type="FunCoup" id="Q89GX0">
    <property type="interactions" value="618"/>
</dbReference>
<dbReference type="STRING" id="224911.AAV28_28680"/>
<dbReference type="EnsemblBacteria" id="BAC51490">
    <property type="protein sequence ID" value="BAC51490"/>
    <property type="gene ID" value="BAC51490"/>
</dbReference>
<dbReference type="GeneID" id="46493213"/>
<dbReference type="KEGG" id="bja:blr6225"/>
<dbReference type="PATRIC" id="fig|224911.44.peg.6198"/>
<dbReference type="eggNOG" id="COG0079">
    <property type="taxonomic scope" value="Bacteria"/>
</dbReference>
<dbReference type="HOGENOM" id="CLU_017584_3_0_5"/>
<dbReference type="InParanoid" id="Q89GX0"/>
<dbReference type="OrthoDB" id="9809616at2"/>
<dbReference type="PhylomeDB" id="Q89GX0"/>
<dbReference type="UniPathway" id="UPA00031">
    <property type="reaction ID" value="UER00012"/>
</dbReference>
<dbReference type="Proteomes" id="UP000002526">
    <property type="component" value="Chromosome"/>
</dbReference>
<dbReference type="GO" id="GO:0004400">
    <property type="term" value="F:histidinol-phosphate transaminase activity"/>
    <property type="evidence" value="ECO:0007669"/>
    <property type="project" value="UniProtKB-UniRule"/>
</dbReference>
<dbReference type="GO" id="GO:0030170">
    <property type="term" value="F:pyridoxal phosphate binding"/>
    <property type="evidence" value="ECO:0007669"/>
    <property type="project" value="InterPro"/>
</dbReference>
<dbReference type="GO" id="GO:0000105">
    <property type="term" value="P:L-histidine biosynthetic process"/>
    <property type="evidence" value="ECO:0007669"/>
    <property type="project" value="UniProtKB-UniRule"/>
</dbReference>
<dbReference type="CDD" id="cd00609">
    <property type="entry name" value="AAT_like"/>
    <property type="match status" value="1"/>
</dbReference>
<dbReference type="Gene3D" id="3.90.1150.10">
    <property type="entry name" value="Aspartate Aminotransferase, domain 1"/>
    <property type="match status" value="1"/>
</dbReference>
<dbReference type="Gene3D" id="3.40.640.10">
    <property type="entry name" value="Type I PLP-dependent aspartate aminotransferase-like (Major domain)"/>
    <property type="match status" value="1"/>
</dbReference>
<dbReference type="HAMAP" id="MF_01023">
    <property type="entry name" value="HisC_aminotrans_2"/>
    <property type="match status" value="1"/>
</dbReference>
<dbReference type="InterPro" id="IPR001917">
    <property type="entry name" value="Aminotrans_II_pyridoxalP_BS"/>
</dbReference>
<dbReference type="InterPro" id="IPR004839">
    <property type="entry name" value="Aminotransferase_I/II_large"/>
</dbReference>
<dbReference type="InterPro" id="IPR005861">
    <property type="entry name" value="HisP_aminotrans"/>
</dbReference>
<dbReference type="InterPro" id="IPR050106">
    <property type="entry name" value="HistidinolP_aminotransfase"/>
</dbReference>
<dbReference type="InterPro" id="IPR015424">
    <property type="entry name" value="PyrdxlP-dep_Trfase"/>
</dbReference>
<dbReference type="InterPro" id="IPR015421">
    <property type="entry name" value="PyrdxlP-dep_Trfase_major"/>
</dbReference>
<dbReference type="InterPro" id="IPR015422">
    <property type="entry name" value="PyrdxlP-dep_Trfase_small"/>
</dbReference>
<dbReference type="NCBIfam" id="TIGR01141">
    <property type="entry name" value="hisC"/>
    <property type="match status" value="1"/>
</dbReference>
<dbReference type="PANTHER" id="PTHR43643:SF3">
    <property type="entry name" value="HISTIDINOL-PHOSPHATE AMINOTRANSFERASE"/>
    <property type="match status" value="1"/>
</dbReference>
<dbReference type="PANTHER" id="PTHR43643">
    <property type="entry name" value="HISTIDINOL-PHOSPHATE AMINOTRANSFERASE 2"/>
    <property type="match status" value="1"/>
</dbReference>
<dbReference type="Pfam" id="PF00155">
    <property type="entry name" value="Aminotran_1_2"/>
    <property type="match status" value="1"/>
</dbReference>
<dbReference type="SUPFAM" id="SSF53383">
    <property type="entry name" value="PLP-dependent transferases"/>
    <property type="match status" value="1"/>
</dbReference>
<dbReference type="PROSITE" id="PS00599">
    <property type="entry name" value="AA_TRANSFER_CLASS_2"/>
    <property type="match status" value="1"/>
</dbReference>
<sequence length="350" mass="38774">MSRFWSPVVRTLSPYVPGEQPKQDGVVKLNTNENPYPPSPRVLAAIASAAERLRLYPDPRATRLREAIAAYCDVAAEQVFVGNGSDEVLAHTFPALLKHDRPLLFPDVTYSFYPVYCRLYGVAHEEVPLDAAMRIEIADYRRPSSAILLCNPNAPTGIALPRDAVAALLAENPDRLVVVDEAYVDFGAESAVPLVAHHDNLLVIQTFSKSRALAGLRVGFAIGQRPLIEALERVKDSFNSYPVDCLAIAGAVAAIEDEAWFLESRTRIIASRDVLTRDLAQLGFEVLPSLANFVFARHRRRSGADLAAALRQRGVLVRHFKKPRIEDFLRITVGTDEQCGRLIEVLRELI</sequence>
<reference key="1">
    <citation type="journal article" date="2002" name="DNA Res.">
        <title>Complete genomic sequence of nitrogen-fixing symbiotic bacterium Bradyrhizobium japonicum USDA110.</title>
        <authorList>
            <person name="Kaneko T."/>
            <person name="Nakamura Y."/>
            <person name="Sato S."/>
            <person name="Minamisawa K."/>
            <person name="Uchiumi T."/>
            <person name="Sasamoto S."/>
            <person name="Watanabe A."/>
            <person name="Idesawa K."/>
            <person name="Iriguchi M."/>
            <person name="Kawashima K."/>
            <person name="Kohara M."/>
            <person name="Matsumoto M."/>
            <person name="Shimpo S."/>
            <person name="Tsuruoka H."/>
            <person name="Wada T."/>
            <person name="Yamada M."/>
            <person name="Tabata S."/>
        </authorList>
    </citation>
    <scope>NUCLEOTIDE SEQUENCE [LARGE SCALE GENOMIC DNA]</scope>
    <source>
        <strain>JCM 10833 / BCRC 13528 / IAM 13628 / NBRC 14792 / USDA 110</strain>
    </source>
</reference>
<protein>
    <recommendedName>
        <fullName>Histidinol-phosphate aminotransferase 1</fullName>
        <ecNumber>2.6.1.9</ecNumber>
    </recommendedName>
    <alternativeName>
        <fullName>Imidazole acetol-phosphate transaminase 1</fullName>
    </alternativeName>
</protein>
<gene>
    <name type="primary">hisC1</name>
    <name type="ordered locus">blr6225</name>
</gene>
<name>HIS81_BRADU</name>
<feature type="chain" id="PRO_0000153325" description="Histidinol-phosphate aminotransferase 1">
    <location>
        <begin position="1"/>
        <end position="350"/>
    </location>
</feature>
<feature type="modified residue" description="N6-(pyridoxal phosphate)lysine" evidence="1">
    <location>
        <position position="209"/>
    </location>
</feature>
<comment type="catalytic activity">
    <reaction>
        <text>L-histidinol phosphate + 2-oxoglutarate = 3-(imidazol-4-yl)-2-oxopropyl phosphate + L-glutamate</text>
        <dbReference type="Rhea" id="RHEA:23744"/>
        <dbReference type="ChEBI" id="CHEBI:16810"/>
        <dbReference type="ChEBI" id="CHEBI:29985"/>
        <dbReference type="ChEBI" id="CHEBI:57766"/>
        <dbReference type="ChEBI" id="CHEBI:57980"/>
        <dbReference type="EC" id="2.6.1.9"/>
    </reaction>
</comment>
<comment type="cofactor">
    <cofactor evidence="1">
        <name>pyridoxal 5'-phosphate</name>
        <dbReference type="ChEBI" id="CHEBI:597326"/>
    </cofactor>
</comment>
<comment type="pathway">
    <text>Amino-acid biosynthesis; L-histidine biosynthesis; L-histidine from 5-phospho-alpha-D-ribose 1-diphosphate: step 7/9.</text>
</comment>
<comment type="subunit">
    <text evidence="1">Homodimer.</text>
</comment>
<comment type="similarity">
    <text evidence="2">Belongs to the class-II pyridoxal-phosphate-dependent aminotransferase family. Histidinol-phosphate aminotransferase subfamily.</text>
</comment>
<keyword id="KW-0028">Amino-acid biosynthesis</keyword>
<keyword id="KW-0032">Aminotransferase</keyword>
<keyword id="KW-0368">Histidine biosynthesis</keyword>
<keyword id="KW-0663">Pyridoxal phosphate</keyword>
<keyword id="KW-1185">Reference proteome</keyword>
<keyword id="KW-0808">Transferase</keyword>
<accession>Q89GX0</accession>
<proteinExistence type="inferred from homology"/>
<organism>
    <name type="scientific">Bradyrhizobium diazoefficiens (strain JCM 10833 / BCRC 13528 / IAM 13628 / NBRC 14792 / USDA 110)</name>
    <dbReference type="NCBI Taxonomy" id="224911"/>
    <lineage>
        <taxon>Bacteria</taxon>
        <taxon>Pseudomonadati</taxon>
        <taxon>Pseudomonadota</taxon>
        <taxon>Alphaproteobacteria</taxon>
        <taxon>Hyphomicrobiales</taxon>
        <taxon>Nitrobacteraceae</taxon>
        <taxon>Bradyrhizobium</taxon>
    </lineage>
</organism>
<evidence type="ECO:0000250" key="1"/>
<evidence type="ECO:0000305" key="2"/>